<dbReference type="EC" id="3.1.3.5"/>
<dbReference type="EMBL" id="AE000512">
    <property type="protein sequence ID" value="AAD36729.1"/>
    <property type="molecule type" value="Genomic_DNA"/>
</dbReference>
<dbReference type="EMBL" id="Y10306">
    <property type="protein sequence ID" value="CAA71355.1"/>
    <property type="molecule type" value="Genomic_DNA"/>
</dbReference>
<dbReference type="PIR" id="D72224">
    <property type="entry name" value="D72224"/>
</dbReference>
<dbReference type="RefSeq" id="NP_229462.1">
    <property type="nucleotide sequence ID" value="NC_000853.1"/>
</dbReference>
<dbReference type="RefSeq" id="WP_004082178.1">
    <property type="nucleotide sequence ID" value="NC_000853.1"/>
</dbReference>
<dbReference type="PDB" id="1ILV">
    <property type="method" value="X-ray"/>
    <property type="resolution" value="2.00 A"/>
    <property type="chains" value="A/B=1-247"/>
</dbReference>
<dbReference type="PDB" id="1J9J">
    <property type="method" value="X-ray"/>
    <property type="resolution" value="1.90 A"/>
    <property type="chains" value="A/B=1-247"/>
</dbReference>
<dbReference type="PDB" id="1J9K">
    <property type="method" value="X-ray"/>
    <property type="resolution" value="2.10 A"/>
    <property type="chains" value="A/B=1-247"/>
</dbReference>
<dbReference type="PDB" id="1J9L">
    <property type="method" value="X-ray"/>
    <property type="resolution" value="1.90 A"/>
    <property type="chains" value="A/B=1-247"/>
</dbReference>
<dbReference type="PDBsum" id="1ILV"/>
<dbReference type="PDBsum" id="1J9J"/>
<dbReference type="PDBsum" id="1J9K"/>
<dbReference type="PDBsum" id="1J9L"/>
<dbReference type="SMR" id="P96112"/>
<dbReference type="STRING" id="243274.TM_1662"/>
<dbReference type="PaxDb" id="243274-THEMA_05935"/>
<dbReference type="DNASU" id="897339"/>
<dbReference type="EnsemblBacteria" id="AAD36729">
    <property type="protein sequence ID" value="AAD36729"/>
    <property type="gene ID" value="TM_1662"/>
</dbReference>
<dbReference type="KEGG" id="tma:TM1662"/>
<dbReference type="KEGG" id="tmi:THEMA_05935"/>
<dbReference type="KEGG" id="tmm:Tmari_1671"/>
<dbReference type="KEGG" id="tmw:THMA_1703"/>
<dbReference type="eggNOG" id="COG0496">
    <property type="taxonomic scope" value="Bacteria"/>
</dbReference>
<dbReference type="InParanoid" id="P96112"/>
<dbReference type="OrthoDB" id="9780815at2"/>
<dbReference type="EvolutionaryTrace" id="P96112"/>
<dbReference type="Proteomes" id="UP000008183">
    <property type="component" value="Chromosome"/>
</dbReference>
<dbReference type="GO" id="GO:0005737">
    <property type="term" value="C:cytoplasm"/>
    <property type="evidence" value="ECO:0007669"/>
    <property type="project" value="UniProtKB-SubCell"/>
</dbReference>
<dbReference type="GO" id="GO:0008254">
    <property type="term" value="F:3'-nucleotidase activity"/>
    <property type="evidence" value="ECO:0000318"/>
    <property type="project" value="GO_Central"/>
</dbReference>
<dbReference type="GO" id="GO:0008253">
    <property type="term" value="F:5'-nucleotidase activity"/>
    <property type="evidence" value="ECO:0000318"/>
    <property type="project" value="GO_Central"/>
</dbReference>
<dbReference type="GO" id="GO:0004309">
    <property type="term" value="F:exopolyphosphatase activity"/>
    <property type="evidence" value="ECO:0000318"/>
    <property type="project" value="GO_Central"/>
</dbReference>
<dbReference type="GO" id="GO:0046872">
    <property type="term" value="F:metal ion binding"/>
    <property type="evidence" value="ECO:0007669"/>
    <property type="project" value="UniProtKB-UniRule"/>
</dbReference>
<dbReference type="GO" id="GO:0000166">
    <property type="term" value="F:nucleotide binding"/>
    <property type="evidence" value="ECO:0007669"/>
    <property type="project" value="UniProtKB-KW"/>
</dbReference>
<dbReference type="FunFam" id="3.40.1210.10:FF:000001">
    <property type="entry name" value="5'/3'-nucleotidase SurE"/>
    <property type="match status" value="1"/>
</dbReference>
<dbReference type="Gene3D" id="3.40.1210.10">
    <property type="entry name" value="Survival protein SurE-like phosphatase/nucleotidase"/>
    <property type="match status" value="1"/>
</dbReference>
<dbReference type="HAMAP" id="MF_00060">
    <property type="entry name" value="SurE"/>
    <property type="match status" value="1"/>
</dbReference>
<dbReference type="InterPro" id="IPR030048">
    <property type="entry name" value="SurE"/>
</dbReference>
<dbReference type="InterPro" id="IPR002828">
    <property type="entry name" value="SurE-like_Pase/nucleotidase"/>
</dbReference>
<dbReference type="InterPro" id="IPR036523">
    <property type="entry name" value="SurE-like_sf"/>
</dbReference>
<dbReference type="NCBIfam" id="NF001490">
    <property type="entry name" value="PRK00346.1-4"/>
    <property type="match status" value="1"/>
</dbReference>
<dbReference type="NCBIfam" id="NF001492">
    <property type="entry name" value="PRK00346.2-2"/>
    <property type="match status" value="1"/>
</dbReference>
<dbReference type="NCBIfam" id="NF010545">
    <property type="entry name" value="PRK13935.1"/>
    <property type="match status" value="1"/>
</dbReference>
<dbReference type="NCBIfam" id="TIGR00087">
    <property type="entry name" value="surE"/>
    <property type="match status" value="1"/>
</dbReference>
<dbReference type="PANTHER" id="PTHR30457">
    <property type="entry name" value="5'-NUCLEOTIDASE SURE"/>
    <property type="match status" value="1"/>
</dbReference>
<dbReference type="PANTHER" id="PTHR30457:SF12">
    <property type="entry name" value="5'_3'-NUCLEOTIDASE SURE"/>
    <property type="match status" value="1"/>
</dbReference>
<dbReference type="Pfam" id="PF01975">
    <property type="entry name" value="SurE"/>
    <property type="match status" value="1"/>
</dbReference>
<dbReference type="SUPFAM" id="SSF64167">
    <property type="entry name" value="SurE-like"/>
    <property type="match status" value="1"/>
</dbReference>
<gene>
    <name type="primary">surE</name>
    <name type="ordered locus">TM_1662</name>
</gene>
<proteinExistence type="evidence at protein level"/>
<evidence type="ECO:0000269" key="1">
    <source>
    </source>
</evidence>
<evidence type="ECO:0000269" key="2">
    <source>
    </source>
</evidence>
<evidence type="ECO:0000305" key="3"/>
<evidence type="ECO:0007829" key="4">
    <source>
        <dbReference type="PDB" id="1J9J"/>
    </source>
</evidence>
<reference key="1">
    <citation type="journal article" date="1999" name="Nature">
        <title>Evidence for lateral gene transfer between Archaea and Bacteria from genome sequence of Thermotoga maritima.</title>
        <authorList>
            <person name="Nelson K.E."/>
            <person name="Clayton R.A."/>
            <person name="Gill S.R."/>
            <person name="Gwinn M.L."/>
            <person name="Dodson R.J."/>
            <person name="Haft D.H."/>
            <person name="Hickey E.K."/>
            <person name="Peterson J.D."/>
            <person name="Nelson W.C."/>
            <person name="Ketchum K.A."/>
            <person name="McDonald L.A."/>
            <person name="Utterback T.R."/>
            <person name="Malek J.A."/>
            <person name="Linher K.D."/>
            <person name="Garrett M.M."/>
            <person name="Stewart A.M."/>
            <person name="Cotton M.D."/>
            <person name="Pratt M.S."/>
            <person name="Phillips C.A."/>
            <person name="Richardson D.L."/>
            <person name="Heidelberg J.F."/>
            <person name="Sutton G.G."/>
            <person name="Fleischmann R.D."/>
            <person name="Eisen J.A."/>
            <person name="White O."/>
            <person name="Salzberg S.L."/>
            <person name="Smith H.O."/>
            <person name="Venter J.C."/>
            <person name="Fraser C.M."/>
        </authorList>
    </citation>
    <scope>NUCLEOTIDE SEQUENCE [LARGE SCALE GENOMIC DNA]</scope>
    <source>
        <strain>ATCC 43589 / DSM 3109 / JCM 10099 / NBRC 100826 / MSB8</strain>
    </source>
</reference>
<reference key="2">
    <citation type="journal article" date="1997" name="J. Mol. Biol.">
        <title>A survey of polypeptide deformylase function throughout the eubacterial lineage.</title>
        <authorList>
            <person name="Mazel D."/>
            <person name="Coic E."/>
            <person name="Blanchard S."/>
            <person name="Saurin W."/>
            <person name="Marliere P."/>
        </authorList>
    </citation>
    <scope>NUCLEOTIDE SEQUENCE [GENOMIC DNA] OF 156-247</scope>
</reference>
<reference key="3">
    <citation type="journal article" date="2003" name="J. Mol. Biol.">
        <title>Structure and function of an archaeal homolog of survival protein E (SurEalpha): an acid phosphatase with purine nucleotide specificity.</title>
        <authorList>
            <person name="Mura C."/>
            <person name="Katz J.E."/>
            <person name="Clarke S.G."/>
            <person name="Eisenberg D."/>
        </authorList>
    </citation>
    <scope>COFACTOR</scope>
</reference>
<reference key="4">
    <citation type="journal article" date="2001" name="Structure">
        <title>Structure of Thermotoga maritima stationary phase survival protein SurE: a novel acid phosphatase.</title>
        <authorList>
            <person name="Zhang R.-G."/>
            <person name="Skarina T."/>
            <person name="Katz J.E."/>
            <person name="Beasley S."/>
            <person name="Khachatryan A."/>
            <person name="Vyas S."/>
            <person name="Arrowsmith C.H."/>
            <person name="Clarke S."/>
            <person name="Edwards A."/>
            <person name="Joachimiak A."/>
            <person name="Savchenko A."/>
        </authorList>
    </citation>
    <scope>X-RAY CRYSTALLOGRAPHY (2.0 ANGSTROMS)</scope>
    <scope>CHARACTERIZATION</scope>
    <scope>SUBUNIT</scope>
    <scope>MUTAGENESIS</scope>
</reference>
<reference key="5">
    <citation type="journal article" date="2001" name="Nat. Struct. Biol.">
        <title>Crystal structure and functional analysis of the SurE protein identify a novel phosphatase family.</title>
        <authorList>
            <person name="Lee J.Y."/>
            <person name="Kwak J.E."/>
            <person name="Moon J."/>
            <person name="Eom S.H."/>
            <person name="Liong E.C."/>
            <person name="Pedelacq J.-D."/>
            <person name="Berendzen J."/>
            <person name="Suh S.W."/>
        </authorList>
    </citation>
    <scope>X-RAY CRYSTALLOGRAPHY (2.3 ANGSTROMS)</scope>
    <scope>CHARACTERIZATION</scope>
</reference>
<comment type="function">
    <text>Nucleotidase that preferentially dephosphorylates 5'-GMP and 5'-AMP.</text>
</comment>
<comment type="catalytic activity">
    <reaction>
        <text>a ribonucleoside 5'-phosphate + H2O = a ribonucleoside + phosphate</text>
        <dbReference type="Rhea" id="RHEA:12484"/>
        <dbReference type="ChEBI" id="CHEBI:15377"/>
        <dbReference type="ChEBI" id="CHEBI:18254"/>
        <dbReference type="ChEBI" id="CHEBI:43474"/>
        <dbReference type="ChEBI" id="CHEBI:58043"/>
        <dbReference type="EC" id="3.1.3.5"/>
    </reaction>
</comment>
<comment type="cofactor">
    <cofactor evidence="2">
        <name>Mg(2+)</name>
        <dbReference type="ChEBI" id="CHEBI:18420"/>
    </cofactor>
    <text evidence="2">Binds 1 Mg(2+) ion per subunit. In contrast to other surE homologs, is essentially inactive with other divalent cations.</text>
</comment>
<comment type="activity regulation">
    <text>Inhibited by vanadate and tungstate.</text>
</comment>
<comment type="biophysicochemical properties">
    <kinetics>
        <KM>31.5 mM for pNPP (at 76 degrees Celsius)</KM>
        <Vmax>51.6 umol/min/mg enzyme with pNPP as substrate (at 76 degrees Celsius)</Vmax>
    </kinetics>
    <phDependence>
        <text>Optimum pH is 5.5-6.2.</text>
    </phDependence>
    <temperatureDependence>
        <text>Optimum temperature is 80 degrees Celsius. Active up to 95 degrees Celsius.</text>
    </temperatureDependence>
</comment>
<comment type="subunit">
    <text evidence="1">Homodimer and possibly homotetramer.</text>
</comment>
<comment type="subcellular location">
    <subcellularLocation>
        <location evidence="3">Cytoplasm</location>
    </subcellularLocation>
</comment>
<comment type="similarity">
    <text evidence="3">Belongs to the SurE nucleotidase family.</text>
</comment>
<comment type="caution">
    <text evidence="3">Was originally annotated as an acid phosphatase (EC 3.1.3.2).</text>
</comment>
<organism>
    <name type="scientific">Thermotoga maritima (strain ATCC 43589 / DSM 3109 / JCM 10099 / NBRC 100826 / MSB8)</name>
    <dbReference type="NCBI Taxonomy" id="243274"/>
    <lineage>
        <taxon>Bacteria</taxon>
        <taxon>Thermotogati</taxon>
        <taxon>Thermotogota</taxon>
        <taxon>Thermotogae</taxon>
        <taxon>Thermotogales</taxon>
        <taxon>Thermotogaceae</taxon>
        <taxon>Thermotoga</taxon>
    </lineage>
</organism>
<feature type="chain" id="PRO_0000111846" description="5'-nucleotidase SurE">
    <location>
        <begin position="1"/>
        <end position="247"/>
    </location>
</feature>
<feature type="binding site">
    <location>
        <position position="8"/>
    </location>
    <ligand>
        <name>Mg(2+)</name>
        <dbReference type="ChEBI" id="CHEBI:18420"/>
    </ligand>
</feature>
<feature type="binding site">
    <location>
        <position position="9"/>
    </location>
    <ligand>
        <name>Mg(2+)</name>
        <dbReference type="ChEBI" id="CHEBI:18420"/>
    </ligand>
</feature>
<feature type="binding site">
    <location>
        <position position="39"/>
    </location>
    <ligand>
        <name>Mg(2+)</name>
        <dbReference type="ChEBI" id="CHEBI:18420"/>
    </ligand>
</feature>
<feature type="binding site">
    <location>
        <position position="95"/>
    </location>
    <ligand>
        <name>Mg(2+)</name>
        <dbReference type="ChEBI" id="CHEBI:18420"/>
    </ligand>
</feature>
<feature type="mutagenesis site" description="Loss of activity." evidence="1">
    <original>D</original>
    <variation>N</variation>
    <location>
        <position position="8"/>
    </location>
</feature>
<feature type="mutagenesis site" description="Loss of activity." evidence="1">
    <original>D</original>
    <variation>N</variation>
    <location>
        <position position="9"/>
    </location>
</feature>
<feature type="mutagenesis site" description="Loss of activity." evidence="1">
    <original>S</original>
    <variation>A</variation>
    <location>
        <position position="127"/>
    </location>
</feature>
<feature type="strand" evidence="4">
    <location>
        <begin position="2"/>
        <end position="6"/>
    </location>
</feature>
<feature type="helix" evidence="4">
    <location>
        <begin position="14"/>
        <end position="23"/>
    </location>
</feature>
<feature type="turn" evidence="4">
    <location>
        <begin position="24"/>
        <end position="26"/>
    </location>
</feature>
<feature type="strand" evidence="4">
    <location>
        <begin position="27"/>
        <end position="36"/>
    </location>
</feature>
<feature type="strand" evidence="4">
    <location>
        <begin position="53"/>
        <end position="55"/>
    </location>
</feature>
<feature type="strand" evidence="4">
    <location>
        <begin position="59"/>
        <end position="69"/>
    </location>
</feature>
<feature type="helix" evidence="4">
    <location>
        <begin position="71"/>
        <end position="80"/>
    </location>
</feature>
<feature type="strand" evidence="4">
    <location>
        <begin position="88"/>
        <end position="97"/>
    </location>
</feature>
<feature type="helix" evidence="4">
    <location>
        <begin position="101"/>
        <end position="106"/>
    </location>
</feature>
<feature type="helix" evidence="4">
    <location>
        <begin position="108"/>
        <end position="118"/>
    </location>
</feature>
<feature type="strand" evidence="4">
    <location>
        <begin position="123"/>
        <end position="129"/>
    </location>
</feature>
<feature type="strand" evidence="4">
    <location>
        <begin position="131"/>
        <end position="133"/>
    </location>
</feature>
<feature type="helix" evidence="4">
    <location>
        <begin position="136"/>
        <end position="149"/>
    </location>
</feature>
<feature type="helix" evidence="4">
    <location>
        <begin position="152"/>
        <end position="154"/>
    </location>
</feature>
<feature type="strand" evidence="4">
    <location>
        <begin position="160"/>
        <end position="165"/>
    </location>
</feature>
<feature type="strand" evidence="4">
    <location>
        <begin position="172"/>
        <end position="175"/>
    </location>
</feature>
<feature type="strand" evidence="4">
    <location>
        <begin position="182"/>
        <end position="191"/>
    </location>
</feature>
<feature type="strand" evidence="4">
    <location>
        <begin position="197"/>
        <end position="206"/>
    </location>
</feature>
<feature type="strand" evidence="4">
    <location>
        <begin position="212"/>
        <end position="214"/>
    </location>
</feature>
<feature type="helix" evidence="4">
    <location>
        <begin position="215"/>
        <end position="220"/>
    </location>
</feature>
<feature type="strand" evidence="4">
    <location>
        <begin position="223"/>
        <end position="229"/>
    </location>
</feature>
<feature type="helix" evidence="4">
    <location>
        <begin position="236"/>
        <end position="245"/>
    </location>
</feature>
<accession>P96112</accession>
<name>SURE_THEMA</name>
<protein>
    <recommendedName>
        <fullName>5'-nucleotidase SurE</fullName>
        <ecNumber>3.1.3.5</ecNumber>
    </recommendedName>
    <alternativeName>
        <fullName>Nucleoside 5'-monophosphate phosphohydrolase</fullName>
    </alternativeName>
</protein>
<sequence length="247" mass="28075">MRILVTNDDGIQSKGIIVLAELLSEEHEVFVVAPDKERSATGHSITIHVPLWMKKVFISERVVAYSTTGTPADCVKLAYNVVMDKRVDLIVSGVNRGPNMGMDILHSGTVSGAMEGAMMNIPSIAISSANYESPDFEGAARFLIDFLKEFDFSLLDPFTMLNINVPAGEIKGWRFTRQSRRRWNDYFEERVSPFGEKYYWMMGEVIEDDDRDDVDYKAVREGYVSITPIHPFLTNEQCLKKLREVYD</sequence>
<keyword id="KW-0002">3D-structure</keyword>
<keyword id="KW-0963">Cytoplasm</keyword>
<keyword id="KW-0378">Hydrolase</keyword>
<keyword id="KW-0460">Magnesium</keyword>
<keyword id="KW-0479">Metal-binding</keyword>
<keyword id="KW-0547">Nucleotide-binding</keyword>
<keyword id="KW-1185">Reference proteome</keyword>